<sequence>MDGDDLIASVYRKIEREKALITAASNMRQSTDNPLVQQRVDANIRDGRKNIAYLEEKMRELQLRQMKQEGASPTDKRLPPNPDGSAPVPPPKDYAPGYSGHEREYGDASGAYPHGGAGTMPSGAPFADPRPFAPVPKARPNYTKLDLIKYDTPYLGPKIQLMLSQLEFKLSVEKQYKAGIEKMVRLYQDEGDRKSRQDAEGRRIESNQKIQLLKQALKRYEDLHVDIESAEAPDDESLSTPNLRKPLTGLLTLRIHAVEDVDHAASSRFSRGPETFVVVKVEDAIKARTKATRTDKWQDEPFNIEIDKANEIELTVYDKSGDRPTPIGMLWVRISDIAEEMRRKKIESEFNASGWVSADKMEHGAAHGRQDAGGAPGSSNRPPSGGHSGGPGQGYAGGAPGGASAGPVLIDSWFALEPVGRIHLTLSFAKQLKDRRPFDIGLNRQGAVRQKKEEVHEKQGHKFVTQQFYNIMRCALCGDFLKYAAGMQCADCKYTCHRKCYPKVVTKCISKANYETDPDEEKINHRIPHRFEGFSNISANWCCHCGYLLPFGRKSAKRCTECGLTCHAQCTHLVPDFCGMSMEAANQILETLIRAKNHNKSASVSSGLSGRTLRPGGPPQAPQDNVALAYPQKPVEGAYGAPQRQPSAEAISAATNTYIPPQSPTAAQRQHIPPRTSSSQSPAAAAAAAAAAATGLRTPQQASDPNRPVQPPPSSHAHYDPAAYASYQQAIPPQAMQKMGAPYGMPQQQQQQAVAPMQQQVAVKEEIPPQQPKVRIGLDHFNFLAVLGKGNFGKVMLAETKSTKKLYAIKVLKKEFIIENDEVESTKSEKRVFLIANKERHPFLLNLHACFQTETRVYFVMEYISGGDLMLHIQRGQFGLKRAQFYAAEVLLALKYFHENGVIYRDLKLDNILLTLDGHIKIADYGLCKENMWYGSTTSTFCGTPEFMAPEILLDKKYGRAVDWWAFGVLIYQMLLQQSPFRGEDEDEIYDAILADEPLYPIHMPRDSVSILQKLLTREPELRLGSGPTDAQEVMSHAFFRNINWDDIYHKRVPPPFLPTISSPTDTSNFDQEFTSVTPVLTPVQSVLSQAMQEEFRGFSYTADFA</sequence>
<protein>
    <recommendedName>
        <fullName evidence="13">Protein kinase C</fullName>
        <ecNumber evidence="15">2.7.11.13</ecNumber>
    </recommendedName>
</protein>
<accession>Q4WVG0</accession>
<gene>
    <name evidence="13" type="primary">pkcA</name>
    <name evidence="16" type="ORF">AFUA_5G11970</name>
</gene>
<proteinExistence type="evidence at protein level"/>
<evidence type="ECO:0000255" key="1">
    <source>
        <dbReference type="PROSITE-ProRule" id="PRU00041"/>
    </source>
</evidence>
<evidence type="ECO:0000255" key="2">
    <source>
        <dbReference type="PROSITE-ProRule" id="PRU00159"/>
    </source>
</evidence>
<evidence type="ECO:0000255" key="3">
    <source>
        <dbReference type="PROSITE-ProRule" id="PRU00226"/>
    </source>
</evidence>
<evidence type="ECO:0000255" key="4">
    <source>
        <dbReference type="PROSITE-ProRule" id="PRU00618"/>
    </source>
</evidence>
<evidence type="ECO:0000255" key="5">
    <source>
        <dbReference type="PROSITE-ProRule" id="PRU01207"/>
    </source>
</evidence>
<evidence type="ECO:0000255" key="6">
    <source>
        <dbReference type="PROSITE-ProRule" id="PRU10027"/>
    </source>
</evidence>
<evidence type="ECO:0000256" key="7">
    <source>
        <dbReference type="SAM" id="MobiDB-lite"/>
    </source>
</evidence>
<evidence type="ECO:0000269" key="8">
    <source>
    </source>
</evidence>
<evidence type="ECO:0000269" key="9">
    <source>
    </source>
</evidence>
<evidence type="ECO:0000269" key="10">
    <source>
    </source>
</evidence>
<evidence type="ECO:0000269" key="11">
    <source>
    </source>
</evidence>
<evidence type="ECO:0000269" key="12">
    <source>
    </source>
</evidence>
<evidence type="ECO:0000303" key="13">
    <source>
    </source>
</evidence>
<evidence type="ECO:0000305" key="14"/>
<evidence type="ECO:0000305" key="15">
    <source>
    </source>
</evidence>
<evidence type="ECO:0000312" key="16">
    <source>
        <dbReference type="EMBL" id="EAL91416.1"/>
    </source>
</evidence>
<dbReference type="EC" id="2.7.11.13" evidence="15"/>
<dbReference type="EMBL" id="AAHF01000003">
    <property type="protein sequence ID" value="EAL91416.1"/>
    <property type="molecule type" value="Genomic_DNA"/>
</dbReference>
<dbReference type="RefSeq" id="XP_753454.1">
    <property type="nucleotide sequence ID" value="XM_748361.1"/>
</dbReference>
<dbReference type="SMR" id="Q4WVG0"/>
<dbReference type="FunCoup" id="Q4WVG0">
    <property type="interactions" value="421"/>
</dbReference>
<dbReference type="STRING" id="330879.Q4WVG0"/>
<dbReference type="EnsemblFungi" id="EAL91416">
    <property type="protein sequence ID" value="EAL91416"/>
    <property type="gene ID" value="AFUA_5G11970"/>
</dbReference>
<dbReference type="GeneID" id="3511583"/>
<dbReference type="KEGG" id="afm:AFUA_5G11970"/>
<dbReference type="VEuPathDB" id="FungiDB:Afu5g11970"/>
<dbReference type="eggNOG" id="KOG0694">
    <property type="taxonomic scope" value="Eukaryota"/>
</dbReference>
<dbReference type="HOGENOM" id="CLU_000288_54_0_1"/>
<dbReference type="InParanoid" id="Q4WVG0"/>
<dbReference type="OMA" id="QCTHLVP"/>
<dbReference type="OrthoDB" id="63267at2759"/>
<dbReference type="PHI-base" id="PHI:5065"/>
<dbReference type="Proteomes" id="UP000002530">
    <property type="component" value="Chromosome 5"/>
</dbReference>
<dbReference type="GO" id="GO:0005737">
    <property type="term" value="C:cytoplasm"/>
    <property type="evidence" value="ECO:0000318"/>
    <property type="project" value="GO_Central"/>
</dbReference>
<dbReference type="GO" id="GO:0010494">
    <property type="term" value="C:cytoplasmic stress granule"/>
    <property type="evidence" value="ECO:0007669"/>
    <property type="project" value="EnsemblFungi"/>
</dbReference>
<dbReference type="GO" id="GO:0005856">
    <property type="term" value="C:cytoskeleton"/>
    <property type="evidence" value="ECO:0007669"/>
    <property type="project" value="EnsemblFungi"/>
</dbReference>
<dbReference type="GO" id="GO:0005634">
    <property type="term" value="C:nucleus"/>
    <property type="evidence" value="ECO:0000318"/>
    <property type="project" value="GO_Central"/>
</dbReference>
<dbReference type="GO" id="GO:0030427">
    <property type="term" value="C:site of polarized growth"/>
    <property type="evidence" value="ECO:0007669"/>
    <property type="project" value="EnsemblFungi"/>
</dbReference>
<dbReference type="GO" id="GO:0005524">
    <property type="term" value="F:ATP binding"/>
    <property type="evidence" value="ECO:0007669"/>
    <property type="project" value="UniProtKB-KW"/>
</dbReference>
<dbReference type="GO" id="GO:0004697">
    <property type="term" value="F:diacylglycerol-dependent serine/threonine kinase activity"/>
    <property type="evidence" value="ECO:0007669"/>
    <property type="project" value="UniProtKB-EC"/>
</dbReference>
<dbReference type="GO" id="GO:0106310">
    <property type="term" value="F:protein serine kinase activity"/>
    <property type="evidence" value="ECO:0007669"/>
    <property type="project" value="RHEA"/>
</dbReference>
<dbReference type="GO" id="GO:0004674">
    <property type="term" value="F:protein serine/threonine kinase activity"/>
    <property type="evidence" value="ECO:0000318"/>
    <property type="project" value="GO_Central"/>
</dbReference>
<dbReference type="GO" id="GO:0008270">
    <property type="term" value="F:zinc ion binding"/>
    <property type="evidence" value="ECO:0007669"/>
    <property type="project" value="UniProtKB-KW"/>
</dbReference>
<dbReference type="GO" id="GO:0009267">
    <property type="term" value="P:cellular response to starvation"/>
    <property type="evidence" value="ECO:0007669"/>
    <property type="project" value="EnsemblFungi"/>
</dbReference>
<dbReference type="GO" id="GO:0009272">
    <property type="term" value="P:fungal-type cell wall biogenesis"/>
    <property type="evidence" value="ECO:0007669"/>
    <property type="project" value="InterPro"/>
</dbReference>
<dbReference type="GO" id="GO:0031505">
    <property type="term" value="P:fungal-type cell wall organization"/>
    <property type="evidence" value="ECO:0000314"/>
    <property type="project" value="AspGD"/>
</dbReference>
<dbReference type="GO" id="GO:0035556">
    <property type="term" value="P:intracellular signal transduction"/>
    <property type="evidence" value="ECO:0007669"/>
    <property type="project" value="EnsemblFungi"/>
</dbReference>
<dbReference type="GO" id="GO:0000425">
    <property type="term" value="P:pexophagy"/>
    <property type="evidence" value="ECO:0007669"/>
    <property type="project" value="EnsemblFungi"/>
</dbReference>
<dbReference type="GO" id="GO:0010606">
    <property type="term" value="P:positive regulation of cytoplasmic mRNA processing body assembly"/>
    <property type="evidence" value="ECO:0007669"/>
    <property type="project" value="EnsemblFungi"/>
</dbReference>
<dbReference type="GO" id="GO:0060237">
    <property type="term" value="P:regulation of fungal-type cell wall organization"/>
    <property type="evidence" value="ECO:0007669"/>
    <property type="project" value="EnsemblFungi"/>
</dbReference>
<dbReference type="GO" id="GO:0060211">
    <property type="term" value="P:regulation of nuclear-transcribed mRNA poly(A) tail shortening"/>
    <property type="evidence" value="ECO:0007669"/>
    <property type="project" value="EnsemblFungi"/>
</dbReference>
<dbReference type="GO" id="GO:0034063">
    <property type="term" value="P:stress granule assembly"/>
    <property type="evidence" value="ECO:0007669"/>
    <property type="project" value="EnsemblFungi"/>
</dbReference>
<dbReference type="CDD" id="cd20822">
    <property type="entry name" value="C1_ScPKC1-like_rpt1"/>
    <property type="match status" value="1"/>
</dbReference>
<dbReference type="CDD" id="cd20823">
    <property type="entry name" value="C1_ScPKC1-like_rpt2"/>
    <property type="match status" value="1"/>
</dbReference>
<dbReference type="CDD" id="cd08689">
    <property type="entry name" value="C2_fungal_Pkc1p"/>
    <property type="match status" value="1"/>
</dbReference>
<dbReference type="CDD" id="cd11621">
    <property type="entry name" value="HR1_PKC-like_1_fungi"/>
    <property type="match status" value="1"/>
</dbReference>
<dbReference type="CDD" id="cd11620">
    <property type="entry name" value="HR1_PKC-like_2_fungi"/>
    <property type="match status" value="1"/>
</dbReference>
<dbReference type="CDD" id="cd05570">
    <property type="entry name" value="STKc_PKC"/>
    <property type="match status" value="1"/>
</dbReference>
<dbReference type="FunFam" id="1.10.287.160:FF:000004">
    <property type="entry name" value="Protein kinase C"/>
    <property type="match status" value="1"/>
</dbReference>
<dbReference type="FunFam" id="1.10.510.10:FF:000101">
    <property type="entry name" value="Protein kinase C"/>
    <property type="match status" value="1"/>
</dbReference>
<dbReference type="FunFam" id="2.60.40.150:FF:000191">
    <property type="entry name" value="Protein kinase C"/>
    <property type="match status" value="1"/>
</dbReference>
<dbReference type="FunFam" id="3.30.200.20:FF:000103">
    <property type="entry name" value="Protein kinase C"/>
    <property type="match status" value="1"/>
</dbReference>
<dbReference type="FunFam" id="3.30.60.20:FF:000014">
    <property type="entry name" value="Protein kinase C"/>
    <property type="match status" value="1"/>
</dbReference>
<dbReference type="FunFam" id="3.30.60.20:FF:000034">
    <property type="entry name" value="Protein kinase C"/>
    <property type="match status" value="1"/>
</dbReference>
<dbReference type="Gene3D" id="3.30.60.20">
    <property type="match status" value="2"/>
</dbReference>
<dbReference type="Gene3D" id="2.60.40.150">
    <property type="entry name" value="C2 domain"/>
    <property type="match status" value="1"/>
</dbReference>
<dbReference type="Gene3D" id="1.10.287.160">
    <property type="entry name" value="HR1 repeat"/>
    <property type="match status" value="1"/>
</dbReference>
<dbReference type="Gene3D" id="3.30.200.20">
    <property type="entry name" value="Phosphorylase Kinase, domain 1"/>
    <property type="match status" value="1"/>
</dbReference>
<dbReference type="Gene3D" id="1.10.510.10">
    <property type="entry name" value="Transferase(Phosphotransferase) domain 1"/>
    <property type="match status" value="1"/>
</dbReference>
<dbReference type="InterPro" id="IPR000961">
    <property type="entry name" value="AGC-kinase_C"/>
</dbReference>
<dbReference type="InterPro" id="IPR046349">
    <property type="entry name" value="C1-like_sf"/>
</dbReference>
<dbReference type="InterPro" id="IPR000008">
    <property type="entry name" value="C2_dom"/>
</dbReference>
<dbReference type="InterPro" id="IPR035892">
    <property type="entry name" value="C2_domain_sf"/>
</dbReference>
<dbReference type="InterPro" id="IPR037778">
    <property type="entry name" value="C2_fungal_PKC"/>
</dbReference>
<dbReference type="InterPro" id="IPR011072">
    <property type="entry name" value="HR1_rho-bd"/>
</dbReference>
<dbReference type="InterPro" id="IPR036274">
    <property type="entry name" value="HR1_rpt_sf"/>
</dbReference>
<dbReference type="InterPro" id="IPR011009">
    <property type="entry name" value="Kinase-like_dom_sf"/>
</dbReference>
<dbReference type="InterPro" id="IPR002219">
    <property type="entry name" value="PE/DAG-bd"/>
</dbReference>
<dbReference type="InterPro" id="IPR037312">
    <property type="entry name" value="PKC-like_HR1"/>
</dbReference>
<dbReference type="InterPro" id="IPR017892">
    <property type="entry name" value="Pkinase_C"/>
</dbReference>
<dbReference type="InterPro" id="IPR000719">
    <property type="entry name" value="Prot_kinase_dom"/>
</dbReference>
<dbReference type="InterPro" id="IPR017441">
    <property type="entry name" value="Protein_kinase_ATP_BS"/>
</dbReference>
<dbReference type="InterPro" id="IPR008271">
    <property type="entry name" value="Ser/Thr_kinase_AS"/>
</dbReference>
<dbReference type="PANTHER" id="PTHR24351">
    <property type="entry name" value="RIBOSOMAL PROTEIN S6 KINASE"/>
    <property type="match status" value="1"/>
</dbReference>
<dbReference type="Pfam" id="PF00130">
    <property type="entry name" value="C1_1"/>
    <property type="match status" value="2"/>
</dbReference>
<dbReference type="Pfam" id="PF02185">
    <property type="entry name" value="HR1"/>
    <property type="match status" value="2"/>
</dbReference>
<dbReference type="Pfam" id="PF00069">
    <property type="entry name" value="Pkinase"/>
    <property type="match status" value="1"/>
</dbReference>
<dbReference type="Pfam" id="PF00433">
    <property type="entry name" value="Pkinase_C"/>
    <property type="match status" value="1"/>
</dbReference>
<dbReference type="SMART" id="SM00109">
    <property type="entry name" value="C1"/>
    <property type="match status" value="2"/>
</dbReference>
<dbReference type="SMART" id="SM00239">
    <property type="entry name" value="C2"/>
    <property type="match status" value="1"/>
</dbReference>
<dbReference type="SMART" id="SM00742">
    <property type="entry name" value="Hr1"/>
    <property type="match status" value="2"/>
</dbReference>
<dbReference type="SMART" id="SM00133">
    <property type="entry name" value="S_TK_X"/>
    <property type="match status" value="1"/>
</dbReference>
<dbReference type="SMART" id="SM00220">
    <property type="entry name" value="S_TKc"/>
    <property type="match status" value="1"/>
</dbReference>
<dbReference type="SUPFAM" id="SSF49562">
    <property type="entry name" value="C2 domain (Calcium/lipid-binding domain, CaLB)"/>
    <property type="match status" value="1"/>
</dbReference>
<dbReference type="SUPFAM" id="SSF57889">
    <property type="entry name" value="Cysteine-rich domain"/>
    <property type="match status" value="2"/>
</dbReference>
<dbReference type="SUPFAM" id="SSF46585">
    <property type="entry name" value="HR1 repeat"/>
    <property type="match status" value="1"/>
</dbReference>
<dbReference type="SUPFAM" id="SSF56112">
    <property type="entry name" value="Protein kinase-like (PK-like)"/>
    <property type="match status" value="1"/>
</dbReference>
<dbReference type="PROSITE" id="PS51285">
    <property type="entry name" value="AGC_KINASE_CTER"/>
    <property type="match status" value="1"/>
</dbReference>
<dbReference type="PROSITE" id="PS50004">
    <property type="entry name" value="C2"/>
    <property type="match status" value="1"/>
</dbReference>
<dbReference type="PROSITE" id="PS00107">
    <property type="entry name" value="PROTEIN_KINASE_ATP"/>
    <property type="match status" value="1"/>
</dbReference>
<dbReference type="PROSITE" id="PS50011">
    <property type="entry name" value="PROTEIN_KINASE_DOM"/>
    <property type="match status" value="1"/>
</dbReference>
<dbReference type="PROSITE" id="PS00108">
    <property type="entry name" value="PROTEIN_KINASE_ST"/>
    <property type="match status" value="1"/>
</dbReference>
<dbReference type="PROSITE" id="PS51860">
    <property type="entry name" value="REM_1"/>
    <property type="match status" value="2"/>
</dbReference>
<dbReference type="PROSITE" id="PS00479">
    <property type="entry name" value="ZF_DAG_PE_1"/>
    <property type="match status" value="2"/>
</dbReference>
<dbReference type="PROSITE" id="PS50081">
    <property type="entry name" value="ZF_DAG_PE_2"/>
    <property type="match status" value="2"/>
</dbReference>
<reference key="1">
    <citation type="journal article" date="2005" name="Nature">
        <title>Genomic sequence of the pathogenic and allergenic filamentous fungus Aspergillus fumigatus.</title>
        <authorList>
            <person name="Nierman W.C."/>
            <person name="Pain A."/>
            <person name="Anderson M.J."/>
            <person name="Wortman J.R."/>
            <person name="Kim H.S."/>
            <person name="Arroyo J."/>
            <person name="Berriman M."/>
            <person name="Abe K."/>
            <person name="Archer D.B."/>
            <person name="Bermejo C."/>
            <person name="Bennett J.W."/>
            <person name="Bowyer P."/>
            <person name="Chen D."/>
            <person name="Collins M."/>
            <person name="Coulsen R."/>
            <person name="Davies R."/>
            <person name="Dyer P.S."/>
            <person name="Farman M.L."/>
            <person name="Fedorova N."/>
            <person name="Fedorova N.D."/>
            <person name="Feldblyum T.V."/>
            <person name="Fischer R."/>
            <person name="Fosker N."/>
            <person name="Fraser A."/>
            <person name="Garcia J.L."/>
            <person name="Garcia M.J."/>
            <person name="Goble A."/>
            <person name="Goldman G.H."/>
            <person name="Gomi K."/>
            <person name="Griffith-Jones S."/>
            <person name="Gwilliam R."/>
            <person name="Haas B.J."/>
            <person name="Haas H."/>
            <person name="Harris D.E."/>
            <person name="Horiuchi H."/>
            <person name="Huang J."/>
            <person name="Humphray S."/>
            <person name="Jimenez J."/>
            <person name="Keller N."/>
            <person name="Khouri H."/>
            <person name="Kitamoto K."/>
            <person name="Kobayashi T."/>
            <person name="Konzack S."/>
            <person name="Kulkarni R."/>
            <person name="Kumagai T."/>
            <person name="Lafton A."/>
            <person name="Latge J.-P."/>
            <person name="Li W."/>
            <person name="Lord A."/>
            <person name="Lu C."/>
            <person name="Majoros W.H."/>
            <person name="May G.S."/>
            <person name="Miller B.L."/>
            <person name="Mohamoud Y."/>
            <person name="Molina M."/>
            <person name="Monod M."/>
            <person name="Mouyna I."/>
            <person name="Mulligan S."/>
            <person name="Murphy L.D."/>
            <person name="O'Neil S."/>
            <person name="Paulsen I."/>
            <person name="Penalva M.A."/>
            <person name="Pertea M."/>
            <person name="Price C."/>
            <person name="Pritchard B.L."/>
            <person name="Quail M.A."/>
            <person name="Rabbinowitsch E."/>
            <person name="Rawlins N."/>
            <person name="Rajandream M.A."/>
            <person name="Reichard U."/>
            <person name="Renauld H."/>
            <person name="Robson G.D."/>
            <person name="Rodriguez de Cordoba S."/>
            <person name="Rodriguez-Pena J.M."/>
            <person name="Ronning C.M."/>
            <person name="Rutter S."/>
            <person name="Salzberg S.L."/>
            <person name="Sanchez M."/>
            <person name="Sanchez-Ferrero J.C."/>
            <person name="Saunders D."/>
            <person name="Seeger K."/>
            <person name="Squares R."/>
            <person name="Squares S."/>
            <person name="Takeuchi M."/>
            <person name="Tekaia F."/>
            <person name="Turner G."/>
            <person name="Vazquez de Aldana C.R."/>
            <person name="Weidman J."/>
            <person name="White O."/>
            <person name="Woodward J.R."/>
            <person name="Yu J.-H."/>
            <person name="Fraser C.M."/>
            <person name="Galagan J.E."/>
            <person name="Asai K."/>
            <person name="Machida M."/>
            <person name="Hall N."/>
            <person name="Barrell B.G."/>
            <person name="Denning D.W."/>
        </authorList>
    </citation>
    <scope>NUCLEOTIDE SEQUENCE [LARGE SCALE GENOMIC DNA]</scope>
    <source>
        <strain>ATCC MYA-4609 / CBS 101355 / FGSC A1100 / Af293</strain>
    </source>
</reference>
<reference key="2">
    <citation type="journal article" date="2015" name="PLoS ONE">
        <title>The Aspergillus fumigatus pkcA G579R mutant is Defective in the activation of the cell wall integrity pathway but is dispensable for virulence in a neutropenic mouse infection model.</title>
        <authorList>
            <person name="Rocha M.C."/>
            <person name="Godoy K.F."/>
            <person name="de Castro P.A."/>
            <person name="Hori J.I."/>
            <person name="Bom V.L."/>
            <person name="Brown N.A."/>
            <person name="Cunha A.F."/>
            <person name="Goldman G.H."/>
            <person name="Malavazi I."/>
        </authorList>
    </citation>
    <scope>FUNCTION</scope>
    <scope>MUTAGENESIS OF GLY-579</scope>
</reference>
<reference key="3">
    <citation type="journal article" date="2016" name="G3 (Bethesda)">
        <title>Aspergillus fumigatus MADS-Box transcription factor rlmA is required for regulation of the cell wall integrity and virulence.</title>
        <authorList>
            <person name="Rocha M.C."/>
            <person name="Fabri J.H."/>
            <person name="Franco de Godoy K."/>
            <person name="Alves de Castro P."/>
            <person name="Hori J.I."/>
            <person name="Ferreira da Cunha A."/>
            <person name="Arentshorst M."/>
            <person name="Ram A.F."/>
            <person name="van den Hondel C.A."/>
            <person name="Goldman G.H."/>
            <person name="Malavazi I."/>
        </authorList>
    </citation>
    <scope>FUNCTION</scope>
    <scope>MUTAGENESIS OF GLY-579</scope>
</reference>
<reference key="4">
    <citation type="journal article" date="2020" name="Appl. Environ. Microbiol.">
        <title>The cell wall integrity pathway contributes to the early stages of Aspergillus fumigatus asexual development.</title>
        <authorList>
            <person name="Rocha M.C."/>
            <person name="Fabri J.H.T.M."/>
            <person name="Simoes I.T."/>
            <person name="Silva-Rocha R."/>
            <person name="Hagiwara D."/>
            <person name="da Cunha A.F."/>
            <person name="Goldman G.H."/>
            <person name="Canovas D."/>
            <person name="Malavazi I."/>
        </authorList>
    </citation>
    <scope>FUNCTION</scope>
</reference>
<reference key="5">
    <citation type="journal article" date="2021" name="Cell. Microbiol.">
        <title>Aspergillus fumigatus Hsp90 interacts with the main components of the cell wall integrity pathway and cooperates in heat shock and cell wall stress adaptation.</title>
        <authorList>
            <person name="Rocha M.C."/>
            <person name="Minari K."/>
            <person name="Fabri J.H.T.M."/>
            <person name="Kerkaert J.D."/>
            <person name="Gava L.M."/>
            <person name="da Cunha A.F."/>
            <person name="Cramer R.A."/>
            <person name="Borges J.C."/>
            <person name="Malavazi I."/>
        </authorList>
    </citation>
    <scope>FUNCTION</scope>
    <scope>INTERACTION WITH HSP90</scope>
    <scope>MUTAGENESIS OF GLY-579</scope>
</reference>
<reference key="6">
    <citation type="journal article" date="2021" name="Genetics">
        <title>Transcriptional control of the production of Aspergillus fumigatus conidia-borne secondary metabolite fumiquinazoline C important for phagocytosis protection.</title>
        <authorList>
            <person name="Rocha M.C."/>
            <person name="Fabri J.H.T.M."/>
            <person name="da Silva L.P."/>
            <person name="Angolini C.F.F."/>
            <person name="Bertolini M.C."/>
            <person name="da Cunha A.F."/>
            <person name="Valiante V."/>
            <person name="Goldman G.H."/>
            <person name="Fill T.P."/>
            <person name="Malavazi I."/>
        </authorList>
    </citation>
    <scope>FUNCTION</scope>
    <scope>MUTAGENESIS OF GLY-579</scope>
</reference>
<organism>
    <name type="scientific">Aspergillus fumigatus (strain ATCC MYA-4609 / CBS 101355 / FGSC A1100 / Af293)</name>
    <name type="common">Neosartorya fumigata</name>
    <dbReference type="NCBI Taxonomy" id="330879"/>
    <lineage>
        <taxon>Eukaryota</taxon>
        <taxon>Fungi</taxon>
        <taxon>Dikarya</taxon>
        <taxon>Ascomycota</taxon>
        <taxon>Pezizomycotina</taxon>
        <taxon>Eurotiomycetes</taxon>
        <taxon>Eurotiomycetidae</taxon>
        <taxon>Eurotiales</taxon>
        <taxon>Aspergillaceae</taxon>
        <taxon>Aspergillus</taxon>
        <taxon>Aspergillus subgen. Fumigati</taxon>
    </lineage>
</organism>
<feature type="chain" id="PRO_0000453183" description="Protein kinase C">
    <location>
        <begin position="1"/>
        <end position="1106"/>
    </location>
</feature>
<feature type="domain" description="REM-1 1" evidence="5">
    <location>
        <begin position="1"/>
        <end position="67"/>
    </location>
</feature>
<feature type="domain" description="REM-1 2" evidence="5">
    <location>
        <begin position="149"/>
        <end position="226"/>
    </location>
</feature>
<feature type="domain" description="C2" evidence="1">
    <location>
        <begin position="232"/>
        <end position="350"/>
    </location>
</feature>
<feature type="domain" description="Protein kinase" evidence="2">
    <location>
        <begin position="781"/>
        <end position="1040"/>
    </location>
</feature>
<feature type="domain" description="AGC-kinase C-terminal" evidence="4">
    <location>
        <begin position="1041"/>
        <end position="1106"/>
    </location>
</feature>
<feature type="zinc finger region" description="Phorbol-ester/DAG-type 1" evidence="3">
    <location>
        <begin position="460"/>
        <end position="508"/>
    </location>
</feature>
<feature type="zinc finger region" description="Phorbol-ester/DAG-type 2" evidence="3">
    <location>
        <begin position="528"/>
        <end position="578"/>
    </location>
</feature>
<feature type="region of interest" description="Disordered" evidence="7">
    <location>
        <begin position="65"/>
        <end position="138"/>
    </location>
</feature>
<feature type="region of interest" description="Disordered" evidence="7">
    <location>
        <begin position="361"/>
        <end position="400"/>
    </location>
</feature>
<feature type="region of interest" description="Disordered" evidence="7">
    <location>
        <begin position="600"/>
        <end position="625"/>
    </location>
</feature>
<feature type="region of interest" description="Disordered" evidence="7">
    <location>
        <begin position="658"/>
        <end position="719"/>
    </location>
</feature>
<feature type="compositionally biased region" description="Pro residues" evidence="7">
    <location>
        <begin position="79"/>
        <end position="93"/>
    </location>
</feature>
<feature type="compositionally biased region" description="Basic and acidic residues" evidence="7">
    <location>
        <begin position="361"/>
        <end position="370"/>
    </location>
</feature>
<feature type="compositionally biased region" description="Gly residues" evidence="7">
    <location>
        <begin position="386"/>
        <end position="400"/>
    </location>
</feature>
<feature type="compositionally biased region" description="Polar residues" evidence="7">
    <location>
        <begin position="600"/>
        <end position="609"/>
    </location>
</feature>
<feature type="compositionally biased region" description="Polar residues" evidence="7">
    <location>
        <begin position="658"/>
        <end position="668"/>
    </location>
</feature>
<feature type="compositionally biased region" description="Low complexity" evidence="7">
    <location>
        <begin position="683"/>
        <end position="693"/>
    </location>
</feature>
<feature type="active site" description="Proton acceptor" evidence="6">
    <location>
        <position position="906"/>
    </location>
</feature>
<feature type="binding site" evidence="2">
    <location>
        <begin position="787"/>
        <end position="795"/>
    </location>
    <ligand>
        <name>ATP</name>
        <dbReference type="ChEBI" id="CHEBI:30616"/>
    </ligand>
</feature>
<feature type="binding site" evidence="2">
    <location>
        <position position="810"/>
    </location>
    <ligand>
        <name>ATP</name>
        <dbReference type="ChEBI" id="CHEBI:30616"/>
    </ligand>
</feature>
<feature type="modified residue" description="Phosphothreonine" evidence="4">
    <location>
        <position position="1082"/>
    </location>
</feature>
<feature type="modified residue" description="Phosphoserine" evidence="4">
    <location>
        <position position="1100"/>
    </location>
</feature>
<feature type="modified residue" description="Phosphotyrosine" evidence="4">
    <location>
        <position position="1101"/>
    </location>
</feature>
<feature type="mutagenesis site" description="Blocks the activation of the cell wall integrity pathway, abolishes the interaction with hsp90, and impairs the production of fumiquinazoline C." evidence="8 11 12">
    <original>G</original>
    <variation>R</variation>
    <location>
        <position position="579"/>
    </location>
</feature>
<keyword id="KW-0067">ATP-binding</keyword>
<keyword id="KW-0418">Kinase</keyword>
<keyword id="KW-0479">Metal-binding</keyword>
<keyword id="KW-0547">Nucleotide-binding</keyword>
<keyword id="KW-0597">Phosphoprotein</keyword>
<keyword id="KW-1185">Reference proteome</keyword>
<keyword id="KW-0677">Repeat</keyword>
<keyword id="KW-0723">Serine/threonine-protein kinase</keyword>
<keyword id="KW-0808">Transferase</keyword>
<keyword id="KW-0843">Virulence</keyword>
<keyword id="KW-0862">Zinc</keyword>
<keyword id="KW-0863">Zinc-finger</keyword>
<name>PKCA_ASPFU</name>
<comment type="function">
    <text evidence="8 9 10 11 12">Protein kinase C; part of cell wall integrity (CWI) signaling pathway composed of pkcA, the bck1-mkk2-mpka MAPK cascade and the downstream rlmA transcription regulator (PubMed:26295576, PubMed:27473315). The CWI signaling pathway regulates cell wall integrity and pyomelanin formation (PubMed:26295576). CWI also controls oxidative stress response, gliotoxin production, iron adaptation and asexual development (PubMed:26295576, PubMed:32005734). Finally, CWI is constitutively required for A.fumigatus to cope with the temperature increase found in the mammalian lung environment, during infection (PubMed:33010083). Modulates the expression of fumiquinazoline cluster during conidiogenesis (PubMed:33705521).</text>
</comment>
<comment type="catalytic activity">
    <reaction>
        <text>L-seryl-[protein] + ATP = O-phospho-L-seryl-[protein] + ADP + H(+)</text>
        <dbReference type="Rhea" id="RHEA:17989"/>
        <dbReference type="Rhea" id="RHEA-COMP:9863"/>
        <dbReference type="Rhea" id="RHEA-COMP:11604"/>
        <dbReference type="ChEBI" id="CHEBI:15378"/>
        <dbReference type="ChEBI" id="CHEBI:29999"/>
        <dbReference type="ChEBI" id="CHEBI:30616"/>
        <dbReference type="ChEBI" id="CHEBI:83421"/>
        <dbReference type="ChEBI" id="CHEBI:456216"/>
        <dbReference type="EC" id="2.7.11.13"/>
    </reaction>
</comment>
<comment type="catalytic activity">
    <reaction>
        <text>L-threonyl-[protein] + ATP = O-phospho-L-threonyl-[protein] + ADP + H(+)</text>
        <dbReference type="Rhea" id="RHEA:46608"/>
        <dbReference type="Rhea" id="RHEA-COMP:11060"/>
        <dbReference type="Rhea" id="RHEA-COMP:11605"/>
        <dbReference type="ChEBI" id="CHEBI:15378"/>
        <dbReference type="ChEBI" id="CHEBI:30013"/>
        <dbReference type="ChEBI" id="CHEBI:30616"/>
        <dbReference type="ChEBI" id="CHEBI:61977"/>
        <dbReference type="ChEBI" id="CHEBI:456216"/>
        <dbReference type="EC" id="2.7.11.13"/>
    </reaction>
</comment>
<comment type="subunit">
    <text evidence="11">Interacts with hsp90.</text>
</comment>
<comment type="similarity">
    <text evidence="14">Belongs to the protein kinase superfamily. AGC Ser/Thr protein kinase family. PKC subfamily.</text>
</comment>